<dbReference type="EMBL" id="CP000733">
    <property type="protein sequence ID" value="ABS76898.1"/>
    <property type="molecule type" value="Genomic_DNA"/>
</dbReference>
<dbReference type="RefSeq" id="WP_005771287.1">
    <property type="nucleotide sequence ID" value="NC_009727.1"/>
</dbReference>
<dbReference type="SMR" id="A9KEA3"/>
<dbReference type="KEGG" id="cbd:CBUD_1585"/>
<dbReference type="HOGENOM" id="CLU_129084_2_1_6"/>
<dbReference type="Proteomes" id="UP000008555">
    <property type="component" value="Chromosome"/>
</dbReference>
<dbReference type="GO" id="GO:0015934">
    <property type="term" value="C:large ribosomal subunit"/>
    <property type="evidence" value="ECO:0007669"/>
    <property type="project" value="InterPro"/>
</dbReference>
<dbReference type="GO" id="GO:0003735">
    <property type="term" value="F:structural constituent of ribosome"/>
    <property type="evidence" value="ECO:0007669"/>
    <property type="project" value="InterPro"/>
</dbReference>
<dbReference type="GO" id="GO:0006412">
    <property type="term" value="P:translation"/>
    <property type="evidence" value="ECO:0007669"/>
    <property type="project" value="UniProtKB-UniRule"/>
</dbReference>
<dbReference type="HAMAP" id="MF_00340">
    <property type="entry name" value="Ribosomal_bL32"/>
    <property type="match status" value="1"/>
</dbReference>
<dbReference type="InterPro" id="IPR002677">
    <property type="entry name" value="Ribosomal_bL32"/>
</dbReference>
<dbReference type="InterPro" id="IPR044957">
    <property type="entry name" value="Ribosomal_bL32_bact"/>
</dbReference>
<dbReference type="InterPro" id="IPR011332">
    <property type="entry name" value="Ribosomal_zn-bd"/>
</dbReference>
<dbReference type="NCBIfam" id="TIGR01031">
    <property type="entry name" value="rpmF_bact"/>
    <property type="match status" value="1"/>
</dbReference>
<dbReference type="PANTHER" id="PTHR35534">
    <property type="entry name" value="50S RIBOSOMAL PROTEIN L32"/>
    <property type="match status" value="1"/>
</dbReference>
<dbReference type="PANTHER" id="PTHR35534:SF1">
    <property type="entry name" value="LARGE RIBOSOMAL SUBUNIT PROTEIN BL32"/>
    <property type="match status" value="1"/>
</dbReference>
<dbReference type="Pfam" id="PF01783">
    <property type="entry name" value="Ribosomal_L32p"/>
    <property type="match status" value="1"/>
</dbReference>
<dbReference type="SUPFAM" id="SSF57829">
    <property type="entry name" value="Zn-binding ribosomal proteins"/>
    <property type="match status" value="1"/>
</dbReference>
<comment type="similarity">
    <text evidence="1">Belongs to the bacterial ribosomal protein bL32 family.</text>
</comment>
<protein>
    <recommendedName>
        <fullName evidence="1">Large ribosomal subunit protein bL32</fullName>
    </recommendedName>
    <alternativeName>
        <fullName evidence="3">50S ribosomal protein L32</fullName>
    </alternativeName>
</protein>
<sequence length="64" mass="7468">MAVQKSRKTRSRRGMRRSHDALRGAMLSKDPTTGETHLRHHISPEGYYKGRQILTPKESYEDEE</sequence>
<evidence type="ECO:0000255" key="1">
    <source>
        <dbReference type="HAMAP-Rule" id="MF_00340"/>
    </source>
</evidence>
<evidence type="ECO:0000256" key="2">
    <source>
        <dbReference type="SAM" id="MobiDB-lite"/>
    </source>
</evidence>
<evidence type="ECO:0000305" key="3"/>
<name>RL32_COXBN</name>
<feature type="chain" id="PRO_1000079324" description="Large ribosomal subunit protein bL32">
    <location>
        <begin position="1"/>
        <end position="64"/>
    </location>
</feature>
<feature type="region of interest" description="Disordered" evidence="2">
    <location>
        <begin position="1"/>
        <end position="64"/>
    </location>
</feature>
<feature type="compositionally biased region" description="Basic residues" evidence="2">
    <location>
        <begin position="1"/>
        <end position="16"/>
    </location>
</feature>
<accession>A9KEA3</accession>
<proteinExistence type="inferred from homology"/>
<keyword id="KW-0687">Ribonucleoprotein</keyword>
<keyword id="KW-0689">Ribosomal protein</keyword>
<reference key="1">
    <citation type="journal article" date="2009" name="Infect. Immun.">
        <title>Comparative genomics reveal extensive transposon-mediated genomic plasticity and diversity among potential effector proteins within the genus Coxiella.</title>
        <authorList>
            <person name="Beare P.A."/>
            <person name="Unsworth N."/>
            <person name="Andoh M."/>
            <person name="Voth D.E."/>
            <person name="Omsland A."/>
            <person name="Gilk S.D."/>
            <person name="Williams K.P."/>
            <person name="Sobral B.W."/>
            <person name="Kupko J.J. III"/>
            <person name="Porcella S.F."/>
            <person name="Samuel J.E."/>
            <person name="Heinzen R.A."/>
        </authorList>
    </citation>
    <scope>NUCLEOTIDE SEQUENCE [LARGE SCALE GENOMIC DNA]</scope>
    <source>
        <strain>Dugway 5J108-111</strain>
    </source>
</reference>
<gene>
    <name evidence="1" type="primary">rpmF</name>
    <name type="ordered locus">CBUD_1585</name>
</gene>
<organism>
    <name type="scientific">Coxiella burnetii (strain Dugway 5J108-111)</name>
    <dbReference type="NCBI Taxonomy" id="434922"/>
    <lineage>
        <taxon>Bacteria</taxon>
        <taxon>Pseudomonadati</taxon>
        <taxon>Pseudomonadota</taxon>
        <taxon>Gammaproteobacteria</taxon>
        <taxon>Legionellales</taxon>
        <taxon>Coxiellaceae</taxon>
        <taxon>Coxiella</taxon>
    </lineage>
</organism>